<comment type="function">
    <text evidence="1">RNaseP catalyzes the removal of the 5'-leader sequence from pre-tRNA to produce the mature 5'-terminus. It can also cleave other RNA substrates such as 4.5S RNA. The protein component plays an auxiliary but essential role in vivo by binding to the 5'-leader sequence and broadening the substrate specificity of the ribozyme.</text>
</comment>
<comment type="catalytic activity">
    <reaction evidence="1">
        <text>Endonucleolytic cleavage of RNA, removing 5'-extranucleotides from tRNA precursor.</text>
        <dbReference type="EC" id="3.1.26.5"/>
    </reaction>
</comment>
<comment type="subunit">
    <text evidence="1">Consists of a catalytic RNA component (M1 or rnpB) and a protein subunit.</text>
</comment>
<comment type="similarity">
    <text evidence="1">Belongs to the RnpA family.</text>
</comment>
<accession>C0M7E1</accession>
<dbReference type="EC" id="3.1.26.5" evidence="1"/>
<dbReference type="EMBL" id="FM204883">
    <property type="protein sequence ID" value="CAW92390.1"/>
    <property type="molecule type" value="Genomic_DNA"/>
</dbReference>
<dbReference type="RefSeq" id="WP_012678960.1">
    <property type="nucleotide sequence ID" value="NC_012471.1"/>
</dbReference>
<dbReference type="SMR" id="C0M7E1"/>
<dbReference type="KEGG" id="seu:SEQ_0304"/>
<dbReference type="HOGENOM" id="CLU_117179_9_1_9"/>
<dbReference type="OrthoDB" id="9810867at2"/>
<dbReference type="Proteomes" id="UP000001365">
    <property type="component" value="Chromosome"/>
</dbReference>
<dbReference type="GO" id="GO:0030677">
    <property type="term" value="C:ribonuclease P complex"/>
    <property type="evidence" value="ECO:0007669"/>
    <property type="project" value="TreeGrafter"/>
</dbReference>
<dbReference type="GO" id="GO:0042781">
    <property type="term" value="F:3'-tRNA processing endoribonuclease activity"/>
    <property type="evidence" value="ECO:0007669"/>
    <property type="project" value="TreeGrafter"/>
</dbReference>
<dbReference type="GO" id="GO:0004526">
    <property type="term" value="F:ribonuclease P activity"/>
    <property type="evidence" value="ECO:0007669"/>
    <property type="project" value="UniProtKB-UniRule"/>
</dbReference>
<dbReference type="GO" id="GO:0000049">
    <property type="term" value="F:tRNA binding"/>
    <property type="evidence" value="ECO:0007669"/>
    <property type="project" value="UniProtKB-UniRule"/>
</dbReference>
<dbReference type="GO" id="GO:0001682">
    <property type="term" value="P:tRNA 5'-leader removal"/>
    <property type="evidence" value="ECO:0007669"/>
    <property type="project" value="UniProtKB-UniRule"/>
</dbReference>
<dbReference type="FunFam" id="3.30.230.10:FF:000021">
    <property type="entry name" value="Ribonuclease P protein component"/>
    <property type="match status" value="1"/>
</dbReference>
<dbReference type="Gene3D" id="3.30.230.10">
    <property type="match status" value="1"/>
</dbReference>
<dbReference type="HAMAP" id="MF_00227">
    <property type="entry name" value="RNase_P"/>
    <property type="match status" value="1"/>
</dbReference>
<dbReference type="InterPro" id="IPR020568">
    <property type="entry name" value="Ribosomal_Su5_D2-typ_SF"/>
</dbReference>
<dbReference type="InterPro" id="IPR014721">
    <property type="entry name" value="Ribsml_uS5_D2-typ_fold_subgr"/>
</dbReference>
<dbReference type="InterPro" id="IPR000100">
    <property type="entry name" value="RNase_P"/>
</dbReference>
<dbReference type="InterPro" id="IPR020539">
    <property type="entry name" value="RNase_P_CS"/>
</dbReference>
<dbReference type="NCBIfam" id="TIGR00188">
    <property type="entry name" value="rnpA"/>
    <property type="match status" value="1"/>
</dbReference>
<dbReference type="PANTHER" id="PTHR33992">
    <property type="entry name" value="RIBONUCLEASE P PROTEIN COMPONENT"/>
    <property type="match status" value="1"/>
</dbReference>
<dbReference type="PANTHER" id="PTHR33992:SF1">
    <property type="entry name" value="RIBONUCLEASE P PROTEIN COMPONENT"/>
    <property type="match status" value="1"/>
</dbReference>
<dbReference type="Pfam" id="PF00825">
    <property type="entry name" value="Ribonuclease_P"/>
    <property type="match status" value="1"/>
</dbReference>
<dbReference type="SUPFAM" id="SSF54211">
    <property type="entry name" value="Ribosomal protein S5 domain 2-like"/>
    <property type="match status" value="1"/>
</dbReference>
<dbReference type="PROSITE" id="PS00648">
    <property type="entry name" value="RIBONUCLEASE_P"/>
    <property type="match status" value="1"/>
</dbReference>
<gene>
    <name evidence="1" type="primary">rnpA</name>
    <name type="ordered locus">SEQ_0304</name>
</gene>
<sequence length="119" mass="13838">MKKSYRVKREKDFQAIFKLGQSMANRKFVIYHLKGEHKHFRAGISVGKKLGNAVTRNAVKRKIRHVLMELGDHLKSEDFVVIARRGAEELDYQAVKQNLHHVLKLAKLLEEGFEIEKKS</sequence>
<feature type="chain" id="PRO_1000194673" description="Ribonuclease P protein component">
    <location>
        <begin position="1"/>
        <end position="119"/>
    </location>
</feature>
<organism>
    <name type="scientific">Streptococcus equi subsp. equi (strain 4047)</name>
    <dbReference type="NCBI Taxonomy" id="553482"/>
    <lineage>
        <taxon>Bacteria</taxon>
        <taxon>Bacillati</taxon>
        <taxon>Bacillota</taxon>
        <taxon>Bacilli</taxon>
        <taxon>Lactobacillales</taxon>
        <taxon>Streptococcaceae</taxon>
        <taxon>Streptococcus</taxon>
    </lineage>
</organism>
<evidence type="ECO:0000255" key="1">
    <source>
        <dbReference type="HAMAP-Rule" id="MF_00227"/>
    </source>
</evidence>
<name>RNPA_STRE4</name>
<proteinExistence type="inferred from homology"/>
<protein>
    <recommendedName>
        <fullName evidence="1">Ribonuclease P protein component</fullName>
        <shortName evidence="1">RNase P protein</shortName>
        <shortName evidence="1">RNaseP protein</shortName>
        <ecNumber evidence="1">3.1.26.5</ecNumber>
    </recommendedName>
    <alternativeName>
        <fullName evidence="1">Protein C5</fullName>
    </alternativeName>
</protein>
<reference key="1">
    <citation type="journal article" date="2009" name="PLoS Pathog.">
        <title>Genomic evidence for the evolution of Streptococcus equi: host restriction, increased virulence, and genetic exchange with human pathogens.</title>
        <authorList>
            <person name="Holden M.T.G."/>
            <person name="Heather Z."/>
            <person name="Paillot R."/>
            <person name="Steward K.F."/>
            <person name="Webb K."/>
            <person name="Ainslie F."/>
            <person name="Jourdan T."/>
            <person name="Bason N.C."/>
            <person name="Holroyd N.E."/>
            <person name="Mungall K."/>
            <person name="Quail M.A."/>
            <person name="Sanders M."/>
            <person name="Simmonds M."/>
            <person name="Willey D."/>
            <person name="Brooks K."/>
            <person name="Aanensen D.M."/>
            <person name="Spratt B.G."/>
            <person name="Jolley K.A."/>
            <person name="Maiden M.C.J."/>
            <person name="Kehoe M."/>
            <person name="Chanter N."/>
            <person name="Bentley S.D."/>
            <person name="Robinson C."/>
            <person name="Maskell D.J."/>
            <person name="Parkhill J."/>
            <person name="Waller A.S."/>
        </authorList>
    </citation>
    <scope>NUCLEOTIDE SEQUENCE [LARGE SCALE GENOMIC DNA]</scope>
    <source>
        <strain>4047</strain>
    </source>
</reference>
<keyword id="KW-0255">Endonuclease</keyword>
<keyword id="KW-0378">Hydrolase</keyword>
<keyword id="KW-0540">Nuclease</keyword>
<keyword id="KW-0694">RNA-binding</keyword>
<keyword id="KW-0819">tRNA processing</keyword>